<gene>
    <name evidence="1" type="primary">rimM</name>
    <name type="ordered locus">BT_2548</name>
</gene>
<comment type="function">
    <text evidence="1">An accessory protein needed during the final step in the assembly of 30S ribosomal subunit, possibly for assembly of the head region. Essential for efficient processing of 16S rRNA. May be needed both before and after RbfA during the maturation of 16S rRNA. It has affinity for free ribosomal 30S subunits but not for 70S ribosomes.</text>
</comment>
<comment type="subunit">
    <text evidence="1">Binds ribosomal protein uS19.</text>
</comment>
<comment type="subcellular location">
    <subcellularLocation>
        <location evidence="1">Cytoplasm</location>
    </subcellularLocation>
</comment>
<comment type="domain">
    <text evidence="1">The PRC barrel domain binds ribosomal protein uS19.</text>
</comment>
<comment type="similarity">
    <text evidence="1">Belongs to the RimM family.</text>
</comment>
<feature type="chain" id="PRO_1000074019" description="Ribosome maturation factor RimM">
    <location>
        <begin position="1"/>
        <end position="181"/>
    </location>
</feature>
<feature type="domain" description="PRC barrel" evidence="1">
    <location>
        <begin position="99"/>
        <end position="172"/>
    </location>
</feature>
<accession>A9IZB5</accession>
<dbReference type="EMBL" id="AM260525">
    <property type="protein sequence ID" value="CAK02512.1"/>
    <property type="molecule type" value="Genomic_DNA"/>
</dbReference>
<dbReference type="RefSeq" id="WP_012232546.1">
    <property type="nucleotide sequence ID" value="NC_010161.1"/>
</dbReference>
<dbReference type="SMR" id="A9IZB5"/>
<dbReference type="KEGG" id="btr:BT_2548"/>
<dbReference type="eggNOG" id="COG0806">
    <property type="taxonomic scope" value="Bacteria"/>
</dbReference>
<dbReference type="HOGENOM" id="CLU_077636_0_1_5"/>
<dbReference type="Proteomes" id="UP000001592">
    <property type="component" value="Chromosome"/>
</dbReference>
<dbReference type="GO" id="GO:0005737">
    <property type="term" value="C:cytoplasm"/>
    <property type="evidence" value="ECO:0007669"/>
    <property type="project" value="UniProtKB-SubCell"/>
</dbReference>
<dbReference type="GO" id="GO:0005840">
    <property type="term" value="C:ribosome"/>
    <property type="evidence" value="ECO:0007669"/>
    <property type="project" value="InterPro"/>
</dbReference>
<dbReference type="GO" id="GO:0043022">
    <property type="term" value="F:ribosome binding"/>
    <property type="evidence" value="ECO:0007669"/>
    <property type="project" value="InterPro"/>
</dbReference>
<dbReference type="GO" id="GO:0042274">
    <property type="term" value="P:ribosomal small subunit biogenesis"/>
    <property type="evidence" value="ECO:0007669"/>
    <property type="project" value="UniProtKB-UniRule"/>
</dbReference>
<dbReference type="GO" id="GO:0006364">
    <property type="term" value="P:rRNA processing"/>
    <property type="evidence" value="ECO:0007669"/>
    <property type="project" value="UniProtKB-UniRule"/>
</dbReference>
<dbReference type="Gene3D" id="2.30.30.240">
    <property type="entry name" value="PRC-barrel domain"/>
    <property type="match status" value="1"/>
</dbReference>
<dbReference type="Gene3D" id="2.40.30.60">
    <property type="entry name" value="RimM"/>
    <property type="match status" value="1"/>
</dbReference>
<dbReference type="HAMAP" id="MF_00014">
    <property type="entry name" value="Ribosome_mat_RimM"/>
    <property type="match status" value="1"/>
</dbReference>
<dbReference type="InterPro" id="IPR011033">
    <property type="entry name" value="PRC_barrel-like_sf"/>
</dbReference>
<dbReference type="InterPro" id="IPR056792">
    <property type="entry name" value="PRC_RimM"/>
</dbReference>
<dbReference type="InterPro" id="IPR011961">
    <property type="entry name" value="RimM"/>
</dbReference>
<dbReference type="InterPro" id="IPR002676">
    <property type="entry name" value="RimM_N"/>
</dbReference>
<dbReference type="InterPro" id="IPR036976">
    <property type="entry name" value="RimM_N_sf"/>
</dbReference>
<dbReference type="InterPro" id="IPR009000">
    <property type="entry name" value="Transl_B-barrel_sf"/>
</dbReference>
<dbReference type="NCBIfam" id="TIGR02273">
    <property type="entry name" value="16S_RimM"/>
    <property type="match status" value="1"/>
</dbReference>
<dbReference type="PANTHER" id="PTHR33692">
    <property type="entry name" value="RIBOSOME MATURATION FACTOR RIMM"/>
    <property type="match status" value="1"/>
</dbReference>
<dbReference type="PANTHER" id="PTHR33692:SF1">
    <property type="entry name" value="RIBOSOME MATURATION FACTOR RIMM"/>
    <property type="match status" value="1"/>
</dbReference>
<dbReference type="Pfam" id="PF24986">
    <property type="entry name" value="PRC_RimM"/>
    <property type="match status" value="1"/>
</dbReference>
<dbReference type="Pfam" id="PF01782">
    <property type="entry name" value="RimM"/>
    <property type="match status" value="1"/>
</dbReference>
<dbReference type="SUPFAM" id="SSF50346">
    <property type="entry name" value="PRC-barrel domain"/>
    <property type="match status" value="1"/>
</dbReference>
<dbReference type="SUPFAM" id="SSF50447">
    <property type="entry name" value="Translation proteins"/>
    <property type="match status" value="1"/>
</dbReference>
<evidence type="ECO:0000255" key="1">
    <source>
        <dbReference type="HAMAP-Rule" id="MF_00014"/>
    </source>
</evidence>
<reference key="1">
    <citation type="journal article" date="2007" name="Nat. Genet.">
        <title>Genomic analysis of Bartonella identifies type IV secretion systems as host adaptability factors.</title>
        <authorList>
            <person name="Saenz H.L."/>
            <person name="Engel P."/>
            <person name="Stoeckli M.C."/>
            <person name="Lanz C."/>
            <person name="Raddatz G."/>
            <person name="Vayssier-Taussat M."/>
            <person name="Birtles R."/>
            <person name="Schuster S.C."/>
            <person name="Dehio C."/>
        </authorList>
    </citation>
    <scope>NUCLEOTIDE SEQUENCE [LARGE SCALE GENOMIC DNA]</scope>
    <source>
        <strain>CIP 105476 / IBS 506</strain>
    </source>
</reference>
<organism>
    <name type="scientific">Bartonella tribocorum (strain CIP 105476 / IBS 506)</name>
    <dbReference type="NCBI Taxonomy" id="382640"/>
    <lineage>
        <taxon>Bacteria</taxon>
        <taxon>Pseudomonadati</taxon>
        <taxon>Pseudomonadota</taxon>
        <taxon>Alphaproteobacteria</taxon>
        <taxon>Hyphomicrobiales</taxon>
        <taxon>Bartonellaceae</taxon>
        <taxon>Bartonella</taxon>
    </lineage>
</organism>
<protein>
    <recommendedName>
        <fullName evidence="1">Ribosome maturation factor RimM</fullName>
    </recommendedName>
</protein>
<name>RIMM_BART1</name>
<proteinExistence type="inferred from homology"/>
<keyword id="KW-0143">Chaperone</keyword>
<keyword id="KW-0963">Cytoplasm</keyword>
<keyword id="KW-0690">Ribosome biogenesis</keyword>
<keyword id="KW-0698">rRNA processing</keyword>
<sequence>MKYNKEKLKNKVYLAIIGMPHGIRGDVFVKILSADPQRFKSYGTLYDDMGRSYEIVTLRTQKNNAIVRFKGVENRNAAESLKGIHLYVMRDQLIDDLREDEFYQVDLIGLRVQEYGGKILGEVCGFCNFGAGDLLEIRLNTGKRMLIPFSKVAVPEICMDSGFLIVDPMAAGLRDGEENDQ</sequence>